<name>HLY2C_STACC</name>
<evidence type="ECO:0000269" key="1">
    <source>
    </source>
</evidence>
<evidence type="ECO:0000305" key="2"/>
<protein>
    <recommendedName>
        <fullName>Hemolysin H2C</fullName>
    </recommendedName>
</protein>
<organism>
    <name type="scientific">Staphylococcus cohnii subsp. cohnii</name>
    <dbReference type="NCBI Taxonomy" id="74704"/>
    <lineage>
        <taxon>Bacteria</taxon>
        <taxon>Bacillati</taxon>
        <taxon>Bacillota</taxon>
        <taxon>Bacilli</taxon>
        <taxon>Bacillales</taxon>
        <taxon>Staphylococcaceae</taxon>
        <taxon>Staphylococcus</taxon>
        <taxon>Staphylococcus cohnii species complex</taxon>
    </lineage>
</organism>
<reference evidence="2" key="1">
    <citation type="journal article" date="2008" name="FEMS Microbiol. Lett.">
        <title>The amino acid sequences and activities of synergistic hemolysins from Staphylococcus cohnii.</title>
        <authorList>
            <person name="Mak P."/>
            <person name="Maszewska A."/>
            <person name="Rozalska M."/>
        </authorList>
    </citation>
    <scope>PROTEIN SEQUENCE</scope>
    <scope>FUNCTION</scope>
    <scope>SUBCELLULAR LOCATION</scope>
    <scope>MASS SPECTROMETRY</scope>
    <scope>FORMYLATION AT MET-1</scope>
    <source>
        <strain evidence="1">ZMF 77</strain>
    </source>
</reference>
<sequence>MDFIIDIIKKIVGLFTGK</sequence>
<proteinExistence type="evidence at protein level"/>
<feature type="peptide" id="PRO_0000302138" description="Hemolysin H2C">
    <location>
        <begin position="1"/>
        <end position="18"/>
    </location>
</feature>
<feature type="modified residue" description="N-formylmethionine" evidence="1">
    <location>
        <position position="1"/>
    </location>
</feature>
<dbReference type="GO" id="GO:0005576">
    <property type="term" value="C:extracellular region"/>
    <property type="evidence" value="ECO:0007669"/>
    <property type="project" value="UniProtKB-SubCell"/>
</dbReference>
<dbReference type="GO" id="GO:0090729">
    <property type="term" value="F:toxin activity"/>
    <property type="evidence" value="ECO:0007669"/>
    <property type="project" value="UniProtKB-KW"/>
</dbReference>
<dbReference type="GO" id="GO:0031640">
    <property type="term" value="P:killing of cells of another organism"/>
    <property type="evidence" value="ECO:0007669"/>
    <property type="project" value="UniProtKB-KW"/>
</dbReference>
<keyword id="KW-0204">Cytolysis</keyword>
<keyword id="KW-0903">Direct protein sequencing</keyword>
<keyword id="KW-0291">Formylation</keyword>
<keyword id="KW-0354">Hemolysis</keyword>
<keyword id="KW-0964">Secreted</keyword>
<keyword id="KW-0800">Toxin</keyword>
<keyword id="KW-0843">Virulence</keyword>
<accession>P85220</accession>
<comment type="function">
    <text evidence="1">Virulence factor. Causes hemolysis of erythrocytes from sheep (HD(50)=4.79 mM), rabbit (HD(50)=8.76 mM), guinea pig (HD(50)=2.00 mM), dog (HD(50)=5.35 mM) and human (HD(50)=6.34 mM). Acts synergistically with beta-hemolysins from S.aureus ATCC 25923. Cytotoxic towards human dermal fibroblasts.</text>
</comment>
<comment type="subcellular location">
    <subcellularLocation>
        <location evidence="1">Secreted</location>
    </subcellularLocation>
</comment>
<comment type="mass spectrometry"/>